<accession>P55879</accession>
<name>GLI2_CHICK</name>
<proteinExistence type="evidence at transcript level"/>
<sequence length="663" mass="73107">LMAGHPNYGDILMQSGGAAGTAHLHEYLSPVDVSRFSSPRVTPRLSRKRALSISPLSDASIDLQTMIRTSPNSLVAYINNSRSSSAASGSYGHLSAGTISPAFSFPHPINPVTYQQILTQQRGLSSAFGHTPPLIQPSPTFPPRQHMAVISVNPPPAQISSNSNCISDSSQSKQSSESAVSSTVNPVINKRTKVKTEVEGLPQYPQPRQEHLTDLKEDLDKDECKQEPEVIYETNCHWEGCTKEYDTQEQLVHHINNDHIHGEKKEFVCRWQDCTREQKPFKAQYMLVVHMRRHTGEKPHKCTFEGCSKAYSRLENLKTHLRSHTGEKPYVCEHEGCNKAFSNASDRAKHQNRTHSNEKPYVCKIPGCTKRYTDPSSLRKHVKTVHGPDAHVTKKQRNDVHPRPPPLKENGDNEASAKQSSKVSEESPEANSTTRSMEDCLQVKTIKTENSVMCQSSPGGQSSCSSEPSPLGSTNNNDSGVEMNMHGGGSLGDLTGWMTRLPVVDSTVSSGNLTVSLQLRKHMTTMQRLEQLKKEKLKTVKDSCSWVNPAPQGRNTKLPPISGNGSILENSGGSSRTLPNPRIMELSVNEVTMLNQINERRDSTTSTISSAYTVSRRSSGISPYFSSRRSSEASQLGHRPNNTSSADSYDPISTGGREFDIKL</sequence>
<organism>
    <name type="scientific">Gallus gallus</name>
    <name type="common">Chicken</name>
    <dbReference type="NCBI Taxonomy" id="9031"/>
    <lineage>
        <taxon>Eukaryota</taxon>
        <taxon>Metazoa</taxon>
        <taxon>Chordata</taxon>
        <taxon>Craniata</taxon>
        <taxon>Vertebrata</taxon>
        <taxon>Euteleostomi</taxon>
        <taxon>Archelosauria</taxon>
        <taxon>Archosauria</taxon>
        <taxon>Dinosauria</taxon>
        <taxon>Saurischia</taxon>
        <taxon>Theropoda</taxon>
        <taxon>Coelurosauria</taxon>
        <taxon>Aves</taxon>
        <taxon>Neognathae</taxon>
        <taxon>Galloanserae</taxon>
        <taxon>Galliformes</taxon>
        <taxon>Phasianidae</taxon>
        <taxon>Phasianinae</taxon>
        <taxon>Gallus</taxon>
    </lineage>
</organism>
<evidence type="ECO:0000250" key="1">
    <source>
        <dbReference type="UniProtKB" id="P10070"/>
    </source>
</evidence>
<evidence type="ECO:0000250" key="2">
    <source>
        <dbReference type="UniProtKB" id="Q0VGT2"/>
    </source>
</evidence>
<evidence type="ECO:0000255" key="3">
    <source>
        <dbReference type="PROSITE-ProRule" id="PRU00042"/>
    </source>
</evidence>
<evidence type="ECO:0000256" key="4">
    <source>
        <dbReference type="SAM" id="MobiDB-lite"/>
    </source>
</evidence>
<evidence type="ECO:0000305" key="5"/>
<keyword id="KW-0010">Activator</keyword>
<keyword id="KW-0966">Cell projection</keyword>
<keyword id="KW-0969">Cilium</keyword>
<keyword id="KW-0963">Cytoplasm</keyword>
<keyword id="KW-0217">Developmental protein</keyword>
<keyword id="KW-0238">DNA-binding</keyword>
<keyword id="KW-0479">Metal-binding</keyword>
<keyword id="KW-0539">Nucleus</keyword>
<keyword id="KW-1185">Reference proteome</keyword>
<keyword id="KW-0677">Repeat</keyword>
<keyword id="KW-0678">Repressor</keyword>
<keyword id="KW-0804">Transcription</keyword>
<keyword id="KW-0805">Transcription regulation</keyword>
<keyword id="KW-0862">Zinc</keyword>
<keyword id="KW-0863">Zinc-finger</keyword>
<feature type="chain" id="PRO_0000047205" description="Zinc finger protein GLI2">
    <location>
        <begin position="1" status="less than"/>
        <end position="663" status="greater than"/>
    </location>
</feature>
<feature type="zinc finger region" description="C2H2-type 1" evidence="3">
    <location>
        <begin position="234"/>
        <end position="259"/>
    </location>
</feature>
<feature type="zinc finger region" description="C2H2-type 2" evidence="3">
    <location>
        <begin position="267"/>
        <end position="294"/>
    </location>
</feature>
<feature type="zinc finger region" description="C2H2-type 3" evidence="3">
    <location>
        <begin position="300"/>
        <end position="324"/>
    </location>
</feature>
<feature type="zinc finger region" description="C2H2-type 4" evidence="3">
    <location>
        <begin position="330"/>
        <end position="355"/>
    </location>
</feature>
<feature type="zinc finger region" description="C2H2-type 5" evidence="3">
    <location>
        <begin position="361"/>
        <end position="386"/>
    </location>
</feature>
<feature type="region of interest" description="Disordered" evidence="4">
    <location>
        <begin position="159"/>
        <end position="186"/>
    </location>
</feature>
<feature type="region of interest" description="Disordered" evidence="4">
    <location>
        <begin position="374"/>
        <end position="440"/>
    </location>
</feature>
<feature type="region of interest" description="Disordered" evidence="4">
    <location>
        <begin position="452"/>
        <end position="481"/>
    </location>
</feature>
<feature type="region of interest" description="Disordered" evidence="4">
    <location>
        <begin position="544"/>
        <end position="578"/>
    </location>
</feature>
<feature type="region of interest" description="Disordered" evidence="4">
    <location>
        <begin position="619"/>
        <end position="663"/>
    </location>
</feature>
<feature type="compositionally biased region" description="Low complexity" evidence="4">
    <location>
        <begin position="160"/>
        <end position="182"/>
    </location>
</feature>
<feature type="compositionally biased region" description="Basic and acidic residues" evidence="4">
    <location>
        <begin position="386"/>
        <end position="402"/>
    </location>
</feature>
<feature type="compositionally biased region" description="Low complexity" evidence="4">
    <location>
        <begin position="456"/>
        <end position="473"/>
    </location>
</feature>
<feature type="compositionally biased region" description="Polar residues" evidence="4">
    <location>
        <begin position="563"/>
        <end position="578"/>
    </location>
</feature>
<feature type="compositionally biased region" description="Polar residues" evidence="4">
    <location>
        <begin position="619"/>
        <end position="647"/>
    </location>
</feature>
<feature type="non-terminal residue">
    <location>
        <position position="1"/>
    </location>
</feature>
<feature type="non-terminal residue">
    <location>
        <position position="663"/>
    </location>
</feature>
<dbReference type="EMBL" id="U60763">
    <property type="protein sequence ID" value="AAB51660.1"/>
    <property type="molecule type" value="mRNA"/>
</dbReference>
<dbReference type="SMR" id="P55879"/>
<dbReference type="FunCoup" id="P55879">
    <property type="interactions" value="150"/>
</dbReference>
<dbReference type="STRING" id="9031.ENSGALP00000018975"/>
<dbReference type="GlyGen" id="P55879">
    <property type="glycosylation" value="1 site"/>
</dbReference>
<dbReference type="PaxDb" id="9031-ENSGALP00000018975"/>
<dbReference type="VEuPathDB" id="HostDB:geneid_395956"/>
<dbReference type="eggNOG" id="KOG1721">
    <property type="taxonomic scope" value="Eukaryota"/>
</dbReference>
<dbReference type="InParanoid" id="P55879"/>
<dbReference type="OrthoDB" id="3214149at2759"/>
<dbReference type="Proteomes" id="UP000000539">
    <property type="component" value="Unassembled WGS sequence"/>
</dbReference>
<dbReference type="GO" id="GO:0005929">
    <property type="term" value="C:cilium"/>
    <property type="evidence" value="ECO:0000250"/>
    <property type="project" value="UniProtKB"/>
</dbReference>
<dbReference type="GO" id="GO:0005737">
    <property type="term" value="C:cytoplasm"/>
    <property type="evidence" value="ECO:0000250"/>
    <property type="project" value="UniProtKB"/>
</dbReference>
<dbReference type="GO" id="GO:0005634">
    <property type="term" value="C:nucleus"/>
    <property type="evidence" value="ECO:0000250"/>
    <property type="project" value="UniProtKB"/>
</dbReference>
<dbReference type="GO" id="GO:0003700">
    <property type="term" value="F:DNA-binding transcription factor activity"/>
    <property type="evidence" value="ECO:0000250"/>
    <property type="project" value="UniProtKB"/>
</dbReference>
<dbReference type="GO" id="GO:0000981">
    <property type="term" value="F:DNA-binding transcription factor activity, RNA polymerase II-specific"/>
    <property type="evidence" value="ECO:0000318"/>
    <property type="project" value="GO_Central"/>
</dbReference>
<dbReference type="GO" id="GO:1990841">
    <property type="term" value="F:promoter-specific chromatin binding"/>
    <property type="evidence" value="ECO:0000250"/>
    <property type="project" value="UniProtKB"/>
</dbReference>
<dbReference type="GO" id="GO:0000978">
    <property type="term" value="F:RNA polymerase II cis-regulatory region sequence-specific DNA binding"/>
    <property type="evidence" value="ECO:0000318"/>
    <property type="project" value="GO_Central"/>
</dbReference>
<dbReference type="GO" id="GO:0043565">
    <property type="term" value="F:sequence-specific DNA binding"/>
    <property type="evidence" value="ECO:0000250"/>
    <property type="project" value="UniProtKB"/>
</dbReference>
<dbReference type="GO" id="GO:0008270">
    <property type="term" value="F:zinc ion binding"/>
    <property type="evidence" value="ECO:0007669"/>
    <property type="project" value="UniProtKB-KW"/>
</dbReference>
<dbReference type="GO" id="GO:0045893">
    <property type="term" value="P:positive regulation of DNA-templated transcription"/>
    <property type="evidence" value="ECO:0000250"/>
    <property type="project" value="UniProtKB"/>
</dbReference>
<dbReference type="GO" id="GO:0006357">
    <property type="term" value="P:regulation of transcription by RNA polymerase II"/>
    <property type="evidence" value="ECO:0000318"/>
    <property type="project" value="GO_Central"/>
</dbReference>
<dbReference type="GO" id="GO:0007224">
    <property type="term" value="P:smoothened signaling pathway"/>
    <property type="evidence" value="ECO:0000318"/>
    <property type="project" value="GO_Central"/>
</dbReference>
<dbReference type="FunFam" id="3.30.160.60:FF:000019">
    <property type="entry name" value="GLI family zinc finger 3"/>
    <property type="match status" value="1"/>
</dbReference>
<dbReference type="FunFam" id="3.30.160.60:FF:000031">
    <property type="entry name" value="GLI family zinc finger 3"/>
    <property type="match status" value="1"/>
</dbReference>
<dbReference type="FunFam" id="3.30.160.60:FF:000036">
    <property type="entry name" value="GLI family zinc finger 3"/>
    <property type="match status" value="1"/>
</dbReference>
<dbReference type="FunFam" id="3.30.160.60:FF:000048">
    <property type="entry name" value="GLI family zinc finger 3"/>
    <property type="match status" value="1"/>
</dbReference>
<dbReference type="FunFam" id="3.30.160.60:FF:000068">
    <property type="entry name" value="GLI family zinc finger 3"/>
    <property type="match status" value="1"/>
</dbReference>
<dbReference type="Gene3D" id="3.30.160.60">
    <property type="entry name" value="Classic Zinc Finger"/>
    <property type="match status" value="5"/>
</dbReference>
<dbReference type="InterPro" id="IPR043359">
    <property type="entry name" value="GLI-like"/>
</dbReference>
<dbReference type="InterPro" id="IPR056436">
    <property type="entry name" value="Znf-C2H2_ZIC1-5/GLI1-3-like"/>
</dbReference>
<dbReference type="InterPro" id="IPR036236">
    <property type="entry name" value="Znf_C2H2_sf"/>
</dbReference>
<dbReference type="InterPro" id="IPR013087">
    <property type="entry name" value="Znf_C2H2_type"/>
</dbReference>
<dbReference type="PANTHER" id="PTHR45718">
    <property type="entry name" value="TRANSCRIPTIONAL ACTIVATOR CUBITUS INTERRUPTUS"/>
    <property type="match status" value="1"/>
</dbReference>
<dbReference type="PANTHER" id="PTHR45718:SF6">
    <property type="entry name" value="ZINC FINGER PROTEIN GLI2"/>
    <property type="match status" value="1"/>
</dbReference>
<dbReference type="Pfam" id="PF00096">
    <property type="entry name" value="zf-C2H2"/>
    <property type="match status" value="3"/>
</dbReference>
<dbReference type="Pfam" id="PF23561">
    <property type="entry name" value="zf-C2H2_15"/>
    <property type="match status" value="1"/>
</dbReference>
<dbReference type="SMART" id="SM00355">
    <property type="entry name" value="ZnF_C2H2"/>
    <property type="match status" value="5"/>
</dbReference>
<dbReference type="SUPFAM" id="SSF57667">
    <property type="entry name" value="beta-beta-alpha zinc fingers"/>
    <property type="match status" value="3"/>
</dbReference>
<dbReference type="PROSITE" id="PS00028">
    <property type="entry name" value="ZINC_FINGER_C2H2_1"/>
    <property type="match status" value="4"/>
</dbReference>
<dbReference type="PROSITE" id="PS50157">
    <property type="entry name" value="ZINC_FINGER_C2H2_2"/>
    <property type="match status" value="4"/>
</dbReference>
<comment type="function">
    <text evidence="1 2">Functions as a transcription regulator in the hedgehog (Hh) pathway. Functions as a transcriptional activator. May also function as transcriptional repressor. Binds to the DNA sequence 5'-GAACCACCCA-3' (By similarity). Is involved in the smoothened (SHH) signaling pathway. Required for normal skeleton development (By similarity).</text>
</comment>
<comment type="subcellular location">
    <subcellularLocation>
        <location evidence="2">Nucleus</location>
    </subcellularLocation>
    <subcellularLocation>
        <location evidence="2">Cytoplasm</location>
    </subcellularLocation>
    <subcellularLocation>
        <location evidence="2">Cell projection</location>
        <location evidence="2">Cilium</location>
    </subcellularLocation>
</comment>
<comment type="domain">
    <text evidence="2">The N-terminal domain confers transcriptional repressor activity, while the C-terminal domain mediates transcriptional activation.</text>
</comment>
<comment type="similarity">
    <text evidence="5">Belongs to the GLI C2H2-type zinc-finger protein family.</text>
</comment>
<gene>
    <name evidence="1" type="primary">GLI2</name>
</gene>
<protein>
    <recommendedName>
        <fullName evidence="5">Zinc finger protein GLI2</fullName>
    </recommendedName>
</protein>
<reference key="1">
    <citation type="journal article" date="1996" name="Dev. Biol.">
        <title>Sonic hedgehog differentially regulates expression of GLI and GLI3 during limb development.</title>
        <authorList>
            <person name="Marigo V."/>
            <person name="Johnson R.L."/>
            <person name="Vortkamp A."/>
            <person name="Tabin C.J."/>
        </authorList>
    </citation>
    <scope>NUCLEOTIDE SEQUENCE [MRNA]</scope>
</reference>